<proteinExistence type="evidence at protein level"/>
<name>LCE2A_HUMAN</name>
<protein>
    <recommendedName>
        <fullName>Late cornified envelope protein 2A</fullName>
    </recommendedName>
    <alternativeName>
        <fullName>Late envelope protein 9</fullName>
    </alternativeName>
</protein>
<gene>
    <name type="primary">LCE2A</name>
    <name type="synonym">LEP9</name>
</gene>
<organism>
    <name type="scientific">Homo sapiens</name>
    <name type="common">Human</name>
    <dbReference type="NCBI Taxonomy" id="9606"/>
    <lineage>
        <taxon>Eukaryota</taxon>
        <taxon>Metazoa</taxon>
        <taxon>Chordata</taxon>
        <taxon>Craniata</taxon>
        <taxon>Vertebrata</taxon>
        <taxon>Euteleostomi</taxon>
        <taxon>Mammalia</taxon>
        <taxon>Eutheria</taxon>
        <taxon>Euarchontoglires</taxon>
        <taxon>Primates</taxon>
        <taxon>Haplorrhini</taxon>
        <taxon>Catarrhini</taxon>
        <taxon>Hominidae</taxon>
        <taxon>Homo</taxon>
    </lineage>
</organism>
<comment type="function">
    <text>Precursors of the cornified envelope of the stratum corneum.</text>
</comment>
<comment type="subunit">
    <text evidence="3">Interacts with CYSRT1.</text>
</comment>
<comment type="interaction">
    <interactant intactId="EBI-10246607">
        <id>Q5TA79</id>
    </interactant>
    <interactant intactId="EBI-10173507">
        <id>Q6UY14-3</id>
        <label>ADAMTSL4</label>
    </interactant>
    <organismsDiffer>false</organismsDiffer>
    <experiments>3</experiments>
</comment>
<comment type="interaction">
    <interactant intactId="EBI-10246607">
        <id>Q5TA79</id>
    </interactant>
    <interactant intactId="EBI-10192698">
        <id>Q02930-3</id>
        <label>CREB5</label>
    </interactant>
    <organismsDiffer>false</organismsDiffer>
    <experiments>3</experiments>
</comment>
<comment type="interaction">
    <interactant intactId="EBI-10246607">
        <id>Q5TA79</id>
    </interactant>
    <interactant intactId="EBI-2115097">
        <id>P07339</id>
        <label>CTSD</label>
    </interactant>
    <organismsDiffer>false</organismsDiffer>
    <experiments>3</experiments>
</comment>
<comment type="interaction">
    <interactant intactId="EBI-10246607">
        <id>Q5TA79</id>
    </interactant>
    <interactant intactId="EBI-3867333">
        <id>A8MQ03</id>
        <label>CYSRT1</label>
    </interactant>
    <organismsDiffer>false</organismsDiffer>
    <experiments>3</experiments>
</comment>
<comment type="interaction">
    <interactant intactId="EBI-10246607">
        <id>Q5TA79</id>
    </interactant>
    <interactant intactId="EBI-10976677">
        <id>G5E9A7</id>
        <label>DMWD</label>
    </interactant>
    <organismsDiffer>false</organismsDiffer>
    <experiments>3</experiments>
</comment>
<comment type="interaction">
    <interactant intactId="EBI-10246607">
        <id>Q5TA79</id>
    </interactant>
    <interactant intactId="EBI-947964">
        <id>Q16610</id>
        <label>ECM1</label>
    </interactant>
    <organismsDiffer>false</organismsDiffer>
    <experiments>3</experiments>
</comment>
<comment type="interaction">
    <interactant intactId="EBI-10246607">
        <id>Q5TA79</id>
    </interactant>
    <interactant intactId="EBI-15639515">
        <id>O15354</id>
        <label>GPR37</label>
    </interactant>
    <organismsDiffer>false</organismsDiffer>
    <experiments>3</experiments>
</comment>
<comment type="interaction">
    <interactant intactId="EBI-10246607">
        <id>Q5TA79</id>
    </interactant>
    <interactant intactId="EBI-747754">
        <id>P28799</id>
        <label>GRN</label>
    </interactant>
    <organismsDiffer>false</organismsDiffer>
    <experiments>3</experiments>
</comment>
<comment type="interaction">
    <interactant intactId="EBI-10246607">
        <id>Q5TA79</id>
    </interactant>
    <interactant intactId="EBI-25860013">
        <id>P28799-2</id>
        <label>GRN</label>
    </interactant>
    <organismsDiffer>false</organismsDiffer>
    <experiments>3</experiments>
</comment>
<comment type="interaction">
    <interactant intactId="EBI-10246607">
        <id>Q5TA79</id>
    </interactant>
    <interactant intactId="EBI-11978177">
        <id>Q96NT3-2</id>
        <label>GUCD1</label>
    </interactant>
    <organismsDiffer>false</organismsDiffer>
    <experiments>3</experiments>
</comment>
<comment type="interaction">
    <interactant intactId="EBI-10246607">
        <id>Q5TA79</id>
    </interactant>
    <interactant intactId="EBI-740785">
        <id>P49639</id>
        <label>HOXA1</label>
    </interactant>
    <organismsDiffer>false</organismsDiffer>
    <experiments>3</experiments>
</comment>
<comment type="interaction">
    <interactant intactId="EBI-10246607">
        <id>Q5TA79</id>
    </interactant>
    <interactant intactId="EBI-11749135">
        <id>Q8IUG1</id>
        <label>KRTAP1-3</label>
    </interactant>
    <organismsDiffer>false</organismsDiffer>
    <experiments>3</experiments>
</comment>
<comment type="interaction">
    <interactant intactId="EBI-10246607">
        <id>Q5TA79</id>
    </interactant>
    <interactant intactId="EBI-10172150">
        <id>P60370</id>
        <label>KRTAP10-5</label>
    </interactant>
    <organismsDiffer>false</organismsDiffer>
    <experiments>6</experiments>
</comment>
<comment type="interaction">
    <interactant intactId="EBI-10246607">
        <id>Q5TA79</id>
    </interactant>
    <interactant intactId="EBI-10172290">
        <id>P60409</id>
        <label>KRTAP10-7</label>
    </interactant>
    <organismsDiffer>false</organismsDiffer>
    <experiments>3</experiments>
</comment>
<comment type="interaction">
    <interactant intactId="EBI-10246607">
        <id>Q5TA79</id>
    </interactant>
    <interactant intactId="EBI-10171774">
        <id>P60410</id>
        <label>KRTAP10-8</label>
    </interactant>
    <organismsDiffer>false</organismsDiffer>
    <experiments>8</experiments>
</comment>
<comment type="interaction">
    <interactant intactId="EBI-10246607">
        <id>Q5TA79</id>
    </interactant>
    <interactant intactId="EBI-10172052">
        <id>P60411</id>
        <label>KRTAP10-9</label>
    </interactant>
    <organismsDiffer>false</organismsDiffer>
    <experiments>6</experiments>
</comment>
<comment type="interaction">
    <interactant intactId="EBI-10246607">
        <id>Q5TA79</id>
    </interactant>
    <interactant intactId="EBI-1052037">
        <id>Q8IUC1</id>
        <label>KRTAP11-1</label>
    </interactant>
    <organismsDiffer>false</organismsDiffer>
    <experiments>3</experiments>
</comment>
<comment type="interaction">
    <interactant intactId="EBI-10246607">
        <id>Q5TA79</id>
    </interactant>
    <interactant intactId="EBI-10210845">
        <id>P59990</id>
        <label>KRTAP12-1</label>
    </interactant>
    <organismsDiffer>false</organismsDiffer>
    <experiments>3</experiments>
</comment>
<comment type="interaction">
    <interactant intactId="EBI-10246607">
        <id>Q5TA79</id>
    </interactant>
    <interactant intactId="EBI-10176379">
        <id>P59991</id>
        <label>KRTAP12-2</label>
    </interactant>
    <organismsDiffer>false</organismsDiffer>
    <experiments>3</experiments>
</comment>
<comment type="interaction">
    <interactant intactId="EBI-10246607">
        <id>Q5TA79</id>
    </interactant>
    <interactant intactId="EBI-11953334">
        <id>P60328</id>
        <label>KRTAP12-3</label>
    </interactant>
    <organismsDiffer>false</organismsDiffer>
    <experiments>3</experiments>
</comment>
<comment type="interaction">
    <interactant intactId="EBI-10246607">
        <id>Q5TA79</id>
    </interactant>
    <interactant intactId="EBI-10176396">
        <id>P60329</id>
        <label>KRTAP12-4</label>
    </interactant>
    <organismsDiffer>false</organismsDiffer>
    <experiments>3</experiments>
</comment>
<comment type="interaction">
    <interactant intactId="EBI-10246607">
        <id>Q5TA79</id>
    </interactant>
    <interactant intactId="EBI-14065470">
        <id>Q9BYR9</id>
        <label>KRTAP2-4</label>
    </interactant>
    <organismsDiffer>false</organismsDiffer>
    <experiments>3</experiments>
</comment>
<comment type="interaction">
    <interactant intactId="EBI-10246607">
        <id>Q5TA79</id>
    </interactant>
    <interactant intactId="EBI-18395721">
        <id>Q3LI59</id>
        <label>KRTAP21-2</label>
    </interactant>
    <organismsDiffer>false</organismsDiffer>
    <experiments>3</experiments>
</comment>
<comment type="interaction">
    <interactant intactId="EBI-10246607">
        <id>Q5TA79</id>
    </interactant>
    <interactant intactId="EBI-751260">
        <id>Q9BYR7</id>
        <label>KRTAP3-2</label>
    </interactant>
    <organismsDiffer>false</organismsDiffer>
    <experiments>3</experiments>
</comment>
<comment type="interaction">
    <interactant intactId="EBI-10246607">
        <id>Q5TA79</id>
    </interactant>
    <interactant intactId="EBI-739863">
        <id>Q9BQ66</id>
        <label>KRTAP4-12</label>
    </interactant>
    <organismsDiffer>false</organismsDiffer>
    <experiments>3</experiments>
</comment>
<comment type="interaction">
    <interactant intactId="EBI-10246607">
        <id>Q5TA79</id>
    </interactant>
    <interactant intactId="EBI-10172511">
        <id>Q9BYR5</id>
        <label>KRTAP4-2</label>
    </interactant>
    <organismsDiffer>false</organismsDiffer>
    <experiments>6</experiments>
</comment>
<comment type="interaction">
    <interactant intactId="EBI-10246607">
        <id>Q5TA79</id>
    </interactant>
    <interactant intactId="EBI-11958132">
        <id>Q9BYR3</id>
        <label>KRTAP4-4</label>
    </interactant>
    <organismsDiffer>false</organismsDiffer>
    <experiments>3</experiments>
</comment>
<comment type="interaction">
    <interactant intactId="EBI-10246607">
        <id>Q5TA79</id>
    </interactant>
    <interactant intactId="EBI-11993254">
        <id>Q9BYR2</id>
        <label>KRTAP4-5</label>
    </interactant>
    <organismsDiffer>false</organismsDiffer>
    <experiments>3</experiments>
</comment>
<comment type="interaction">
    <interactant intactId="EBI-10246607">
        <id>Q5TA79</id>
    </interactant>
    <interactant intactId="EBI-10250562">
        <id>Q6L8G9</id>
        <label>KRTAP5-6</label>
    </interactant>
    <organismsDiffer>false</organismsDiffer>
    <experiments>3</experiments>
</comment>
<comment type="interaction">
    <interactant intactId="EBI-10246607">
        <id>Q5TA79</id>
    </interactant>
    <interactant intactId="EBI-3958099">
        <id>P26371</id>
        <label>KRTAP5-9</label>
    </interactant>
    <organismsDiffer>false</organismsDiffer>
    <experiments>9</experiments>
</comment>
<comment type="interaction">
    <interactant intactId="EBI-10246607">
        <id>Q5TA79</id>
    </interactant>
    <interactant intactId="EBI-22311199">
        <id>Q3LI67</id>
        <label>KRTAP6-3</label>
    </interactant>
    <organismsDiffer>false</organismsDiffer>
    <experiments>3</experiments>
</comment>
<comment type="interaction">
    <interactant intactId="EBI-10246607">
        <id>Q5TA79</id>
    </interactant>
    <interactant intactId="EBI-1044640">
        <id>Q9BYQ4</id>
        <label>KRTAP9-2</label>
    </interactant>
    <organismsDiffer>false</organismsDiffer>
    <experiments>6</experiments>
</comment>
<comment type="interaction">
    <interactant intactId="EBI-10246607">
        <id>Q5TA79</id>
    </interactant>
    <interactant intactId="EBI-1043191">
        <id>Q9BYQ3</id>
        <label>KRTAP9-3</label>
    </interactant>
    <organismsDiffer>false</organismsDiffer>
    <experiments>3</experiments>
</comment>
<comment type="interaction">
    <interactant intactId="EBI-10246607">
        <id>Q5TA79</id>
    </interactant>
    <interactant intactId="EBI-11958364">
        <id>Q9BYQ0</id>
        <label>KRTAP9-8</label>
    </interactant>
    <organismsDiffer>false</organismsDiffer>
    <experiments>3</experiments>
</comment>
<comment type="interaction">
    <interactant intactId="EBI-10246607">
        <id>Q5TA79</id>
    </interactant>
    <interactant intactId="EBI-11962058">
        <id>Q5T7P2</id>
        <label>LCE1A</label>
    </interactant>
    <organismsDiffer>false</organismsDiffer>
    <experiments>3</experiments>
</comment>
<comment type="interaction">
    <interactant intactId="EBI-10246607">
        <id>Q5TA79</id>
    </interactant>
    <interactant intactId="EBI-10245913">
        <id>Q5T7P3</id>
        <label>LCE1B</label>
    </interactant>
    <organismsDiffer>false</organismsDiffer>
    <experiments>3</experiments>
</comment>
<comment type="interaction">
    <interactant intactId="EBI-10246607">
        <id>Q5TA79</id>
    </interactant>
    <interactant intactId="EBI-12224199">
        <id>Q5T751</id>
        <label>LCE1C</label>
    </interactant>
    <organismsDiffer>false</organismsDiffer>
    <experiments>3</experiments>
</comment>
<comment type="interaction">
    <interactant intactId="EBI-10246607">
        <id>Q5TA79</id>
    </interactant>
    <interactant intactId="EBI-11741311">
        <id>Q5T752</id>
        <label>LCE1D</label>
    </interactant>
    <organismsDiffer>false</organismsDiffer>
    <experiments>6</experiments>
</comment>
<comment type="interaction">
    <interactant intactId="EBI-10246607">
        <id>Q5TA79</id>
    </interactant>
    <interactant intactId="EBI-11478468">
        <id>O14633</id>
        <label>LCE2B</label>
    </interactant>
    <organismsDiffer>false</organismsDiffer>
    <experiments>3</experiments>
</comment>
<comment type="interaction">
    <interactant intactId="EBI-10246607">
        <id>Q5TA79</id>
    </interactant>
    <interactant intactId="EBI-11973993">
        <id>Q5TA81</id>
        <label>LCE2C</label>
    </interactant>
    <organismsDiffer>false</organismsDiffer>
    <experiments>3</experiments>
</comment>
<comment type="interaction">
    <interactant intactId="EBI-10246607">
        <id>Q5TA79</id>
    </interactant>
    <interactant intactId="EBI-9394625">
        <id>Q5TA76</id>
        <label>LCE3A</label>
    </interactant>
    <organismsDiffer>false</organismsDiffer>
    <experiments>3</experiments>
</comment>
<comment type="interaction">
    <interactant intactId="EBI-10246607">
        <id>Q5TA79</id>
    </interactant>
    <interactant intactId="EBI-748397">
        <id>P50222</id>
        <label>MEOX2</label>
    </interactant>
    <organismsDiffer>false</organismsDiffer>
    <experiments>3</experiments>
</comment>
<comment type="interaction">
    <interactant intactId="EBI-10246607">
        <id>Q5TA79</id>
    </interactant>
    <interactant intactId="EBI-16439278">
        <id>Q6FHY5</id>
        <label>MEOX2</label>
    </interactant>
    <organismsDiffer>false</organismsDiffer>
    <experiments>3</experiments>
</comment>
<comment type="interaction">
    <interactant intactId="EBI-10246607">
        <id>Q5TA79</id>
    </interactant>
    <interactant intactId="EBI-740446">
        <id>P32242</id>
        <label>OTX1</label>
    </interactant>
    <organismsDiffer>false</organismsDiffer>
    <experiments>3</experiments>
</comment>
<comment type="interaction">
    <interactant intactId="EBI-10246607">
        <id>Q5TA79</id>
    </interactant>
    <interactant intactId="EBI-726466">
        <id>O15496</id>
        <label>PLA2G10</label>
    </interactant>
    <organismsDiffer>false</organismsDiffer>
    <experiments>3</experiments>
</comment>
<comment type="interaction">
    <interactant intactId="EBI-10246607">
        <id>Q5TA79</id>
    </interactant>
    <interactant intactId="EBI-3918154">
        <id>Q9UGC6</id>
        <label>RGS17</label>
    </interactant>
    <organismsDiffer>false</organismsDiffer>
    <experiments>3</experiments>
</comment>
<comment type="interaction">
    <interactant intactId="EBI-10246607">
        <id>Q5TA79</id>
    </interactant>
    <interactant intactId="EBI-10178530">
        <id>O76081-6</id>
        <label>RGS20</label>
    </interactant>
    <organismsDiffer>false</organismsDiffer>
    <experiments>3</experiments>
</comment>
<comment type="interaction">
    <interactant intactId="EBI-10246607">
        <id>Q5TA79</id>
    </interactant>
    <interactant intactId="EBI-5235340">
        <id>Q7Z699</id>
        <label>SPRED1</label>
    </interactant>
    <organismsDiffer>false</organismsDiffer>
    <experiments>3</experiments>
</comment>
<comment type="interaction">
    <interactant intactId="EBI-10246607">
        <id>Q5TA79</id>
    </interactant>
    <interactant intactId="EBI-3866665">
        <id>O43609</id>
        <label>SPRY1</label>
    </interactant>
    <organismsDiffer>false</organismsDiffer>
    <experiments>3</experiments>
</comment>
<comment type="interaction">
    <interactant intactId="EBI-10246607">
        <id>Q5TA79</id>
    </interactant>
    <interactant intactId="EBI-10175576">
        <id>G2XKQ0</id>
        <label>SUMO1P1</label>
    </interactant>
    <organismsDiffer>false</organismsDiffer>
    <experiments>3</experiments>
</comment>
<comment type="interaction">
    <interactant intactId="EBI-10246607">
        <id>Q5TA79</id>
    </interactant>
    <interactant intactId="EBI-5235829">
        <id>Q8IWZ5</id>
        <label>TRIM42</label>
    </interactant>
    <organismsDiffer>false</organismsDiffer>
    <experiments>3</experiments>
</comment>
<comment type="interaction">
    <interactant intactId="EBI-10246607">
        <id>Q5TA79</id>
    </interactant>
    <interactant intactId="EBI-10249550">
        <id>Q6EMK4</id>
        <label>VASN</label>
    </interactant>
    <organismsDiffer>false</organismsDiffer>
    <experiments>3</experiments>
</comment>
<comment type="interaction">
    <interactant intactId="EBI-10246607">
        <id>Q5TA79</id>
    </interactant>
    <interactant intactId="EBI-720609">
        <id>O76024</id>
        <label>WFS1</label>
    </interactant>
    <organismsDiffer>false</organismsDiffer>
    <experiments>3</experiments>
</comment>
<comment type="tissue specificity">
    <text evidence="2">Skin-specific. Expression was readily detected in adult trunk skin, adult arm skin, fetal skin, penal skin, vulva, esophagus and tongue. Not expressed in the cervix, rectum, lung, colon, or placenta.</text>
</comment>
<comment type="induction">
    <text evidence="2">By calcium and UVB.</text>
</comment>
<comment type="miscellaneous">
    <text>Belongs to the LCE cluster present on 1q21.</text>
</comment>
<comment type="similarity">
    <text evidence="4">Belongs to the LCE family.</text>
</comment>
<dbReference type="EMBL" id="AL139247">
    <property type="status" value="NOT_ANNOTATED_CDS"/>
    <property type="molecule type" value="Genomic_DNA"/>
</dbReference>
<dbReference type="EMBL" id="CH471121">
    <property type="protein sequence ID" value="EAW53371.1"/>
    <property type="molecule type" value="Genomic_DNA"/>
</dbReference>
<dbReference type="EMBL" id="BC119707">
    <property type="protein sequence ID" value="AAI19708.1"/>
    <property type="molecule type" value="mRNA"/>
</dbReference>
<dbReference type="CCDS" id="CCDS1021.1"/>
<dbReference type="RefSeq" id="NP_848515.1">
    <property type="nucleotide sequence ID" value="NM_178428.4"/>
</dbReference>
<dbReference type="BioGRID" id="131645">
    <property type="interactions" value="69"/>
</dbReference>
<dbReference type="FunCoup" id="Q5TA79">
    <property type="interactions" value="26"/>
</dbReference>
<dbReference type="IntAct" id="Q5TA79">
    <property type="interactions" value="52"/>
</dbReference>
<dbReference type="STRING" id="9606.ENSP00000357768"/>
<dbReference type="iPTMnet" id="Q5TA79"/>
<dbReference type="PhosphoSitePlus" id="Q5TA79"/>
<dbReference type="BioMuta" id="LCE2A"/>
<dbReference type="MassIVE" id="Q5TA79"/>
<dbReference type="PaxDb" id="9606-ENSP00000357768"/>
<dbReference type="PeptideAtlas" id="Q5TA79"/>
<dbReference type="ProteomicsDB" id="64834"/>
<dbReference type="Antibodypedia" id="76533">
    <property type="antibodies" value="25 antibodies from 5 providers"/>
</dbReference>
<dbReference type="DNASU" id="353139"/>
<dbReference type="Ensembl" id="ENST00000368779.2">
    <property type="protein sequence ID" value="ENSP00000357768.1"/>
    <property type="gene ID" value="ENSG00000187173.4"/>
</dbReference>
<dbReference type="GeneID" id="353139"/>
<dbReference type="KEGG" id="hsa:353139"/>
<dbReference type="MANE-Select" id="ENST00000368779.2">
    <property type="protein sequence ID" value="ENSP00000357768.1"/>
    <property type="RefSeq nucleotide sequence ID" value="NM_178428.4"/>
    <property type="RefSeq protein sequence ID" value="NP_848515.1"/>
</dbReference>
<dbReference type="UCSC" id="uc001faj.3">
    <property type="organism name" value="human"/>
</dbReference>
<dbReference type="AGR" id="HGNC:29469"/>
<dbReference type="CTD" id="353139"/>
<dbReference type="GeneCards" id="LCE2A"/>
<dbReference type="HGNC" id="HGNC:29469">
    <property type="gene designation" value="LCE2A"/>
</dbReference>
<dbReference type="HPA" id="ENSG00000187173">
    <property type="expression patterns" value="Tissue enriched (skin)"/>
</dbReference>
<dbReference type="MIM" id="612609">
    <property type="type" value="gene"/>
</dbReference>
<dbReference type="neXtProt" id="NX_Q5TA79"/>
<dbReference type="OpenTargets" id="ENSG00000187173"/>
<dbReference type="PharmGKB" id="PA134911274"/>
<dbReference type="VEuPathDB" id="HostDB:ENSG00000187173"/>
<dbReference type="eggNOG" id="ENOG502TDZA">
    <property type="taxonomic scope" value="Eukaryota"/>
</dbReference>
<dbReference type="GeneTree" id="ENSGT00940000161842"/>
<dbReference type="HOGENOM" id="CLU_152038_0_0_1"/>
<dbReference type="InParanoid" id="Q5TA79"/>
<dbReference type="OMA" id="CECERSG"/>
<dbReference type="PAN-GO" id="Q5TA79">
    <property type="GO annotations" value="0 GO annotations based on evolutionary models"/>
</dbReference>
<dbReference type="PathwayCommons" id="Q5TA79"/>
<dbReference type="Reactome" id="R-HSA-6809371">
    <property type="pathway name" value="Formation of the cornified envelope"/>
</dbReference>
<dbReference type="SignaLink" id="Q5TA79"/>
<dbReference type="BioGRID-ORCS" id="353139">
    <property type="hits" value="256 hits in 1054 CRISPR screens"/>
</dbReference>
<dbReference type="GenomeRNAi" id="353139"/>
<dbReference type="Pharos" id="Q5TA79">
    <property type="development level" value="Tdark"/>
</dbReference>
<dbReference type="PRO" id="PR:Q5TA79"/>
<dbReference type="Proteomes" id="UP000005640">
    <property type="component" value="Chromosome 1"/>
</dbReference>
<dbReference type="RNAct" id="Q5TA79">
    <property type="molecule type" value="protein"/>
</dbReference>
<dbReference type="Bgee" id="ENSG00000187173">
    <property type="expression patterns" value="Expressed in skin of leg and 58 other cell types or tissues"/>
</dbReference>
<dbReference type="GO" id="GO:0031424">
    <property type="term" value="P:keratinization"/>
    <property type="evidence" value="ECO:0007669"/>
    <property type="project" value="UniProtKB-KW"/>
</dbReference>
<dbReference type="InterPro" id="IPR028205">
    <property type="entry name" value="LCE"/>
</dbReference>
<dbReference type="Pfam" id="PF14672">
    <property type="entry name" value="LCE"/>
    <property type="match status" value="1"/>
</dbReference>
<dbReference type="PRINTS" id="PR00021">
    <property type="entry name" value="PRORICH"/>
</dbReference>
<evidence type="ECO:0000256" key="1">
    <source>
        <dbReference type="SAM" id="MobiDB-lite"/>
    </source>
</evidence>
<evidence type="ECO:0000269" key="2">
    <source>
    </source>
</evidence>
<evidence type="ECO:0000269" key="3">
    <source>
    </source>
</evidence>
<evidence type="ECO:0000305" key="4"/>
<feature type="chain" id="PRO_0000235330" description="Late cornified envelope protein 2A">
    <location>
        <begin position="1"/>
        <end position="106"/>
    </location>
</feature>
<feature type="region of interest" description="Disordered" evidence="1">
    <location>
        <begin position="1"/>
        <end position="25"/>
    </location>
</feature>
<feature type="compositionally biased region" description="Low complexity" evidence="1">
    <location>
        <begin position="1"/>
        <end position="10"/>
    </location>
</feature>
<feature type="compositionally biased region" description="Pro residues" evidence="1">
    <location>
        <begin position="11"/>
        <end position="25"/>
    </location>
</feature>
<feature type="sequence variant" id="VAR_062118" description="In dbSNP:rs58733562.">
    <original>C</original>
    <variation>Y</variation>
    <location>
        <position position="20"/>
    </location>
</feature>
<accession>Q5TA79</accession>
<accession>A4QMZ9</accession>
<sequence length="106" mass="10846">MSCQQNQQQCQPPPKCPPKCPPKCPPKCRPQCPAPCPPPVSSCCGPSSGGCCGSSSGGCCSSGGGGCCLSHHRPRLFHRHRHQSPDCCECEPSGGSGCCHSSGDCC</sequence>
<reference key="1">
    <citation type="journal article" date="2006" name="Nature">
        <title>The DNA sequence and biological annotation of human chromosome 1.</title>
        <authorList>
            <person name="Gregory S.G."/>
            <person name="Barlow K.F."/>
            <person name="McLay K.E."/>
            <person name="Kaul R."/>
            <person name="Swarbreck D."/>
            <person name="Dunham A."/>
            <person name="Scott C.E."/>
            <person name="Howe K.L."/>
            <person name="Woodfine K."/>
            <person name="Spencer C.C.A."/>
            <person name="Jones M.C."/>
            <person name="Gillson C."/>
            <person name="Searle S."/>
            <person name="Zhou Y."/>
            <person name="Kokocinski F."/>
            <person name="McDonald L."/>
            <person name="Evans R."/>
            <person name="Phillips K."/>
            <person name="Atkinson A."/>
            <person name="Cooper R."/>
            <person name="Jones C."/>
            <person name="Hall R.E."/>
            <person name="Andrews T.D."/>
            <person name="Lloyd C."/>
            <person name="Ainscough R."/>
            <person name="Almeida J.P."/>
            <person name="Ambrose K.D."/>
            <person name="Anderson F."/>
            <person name="Andrew R.W."/>
            <person name="Ashwell R.I.S."/>
            <person name="Aubin K."/>
            <person name="Babbage A.K."/>
            <person name="Bagguley C.L."/>
            <person name="Bailey J."/>
            <person name="Beasley H."/>
            <person name="Bethel G."/>
            <person name="Bird C.P."/>
            <person name="Bray-Allen S."/>
            <person name="Brown J.Y."/>
            <person name="Brown A.J."/>
            <person name="Buckley D."/>
            <person name="Burton J."/>
            <person name="Bye J."/>
            <person name="Carder C."/>
            <person name="Chapman J.C."/>
            <person name="Clark S.Y."/>
            <person name="Clarke G."/>
            <person name="Clee C."/>
            <person name="Cobley V."/>
            <person name="Collier R.E."/>
            <person name="Corby N."/>
            <person name="Coville G.J."/>
            <person name="Davies J."/>
            <person name="Deadman R."/>
            <person name="Dunn M."/>
            <person name="Earthrowl M."/>
            <person name="Ellington A.G."/>
            <person name="Errington H."/>
            <person name="Frankish A."/>
            <person name="Frankland J."/>
            <person name="French L."/>
            <person name="Garner P."/>
            <person name="Garnett J."/>
            <person name="Gay L."/>
            <person name="Ghori M.R.J."/>
            <person name="Gibson R."/>
            <person name="Gilby L.M."/>
            <person name="Gillett W."/>
            <person name="Glithero R.J."/>
            <person name="Grafham D.V."/>
            <person name="Griffiths C."/>
            <person name="Griffiths-Jones S."/>
            <person name="Grocock R."/>
            <person name="Hammond S."/>
            <person name="Harrison E.S.I."/>
            <person name="Hart E."/>
            <person name="Haugen E."/>
            <person name="Heath P.D."/>
            <person name="Holmes S."/>
            <person name="Holt K."/>
            <person name="Howden P.J."/>
            <person name="Hunt A.R."/>
            <person name="Hunt S.E."/>
            <person name="Hunter G."/>
            <person name="Isherwood J."/>
            <person name="James R."/>
            <person name="Johnson C."/>
            <person name="Johnson D."/>
            <person name="Joy A."/>
            <person name="Kay M."/>
            <person name="Kershaw J.K."/>
            <person name="Kibukawa M."/>
            <person name="Kimberley A.M."/>
            <person name="King A."/>
            <person name="Knights A.J."/>
            <person name="Lad H."/>
            <person name="Laird G."/>
            <person name="Lawlor S."/>
            <person name="Leongamornlert D.A."/>
            <person name="Lloyd D.M."/>
            <person name="Loveland J."/>
            <person name="Lovell J."/>
            <person name="Lush M.J."/>
            <person name="Lyne R."/>
            <person name="Martin S."/>
            <person name="Mashreghi-Mohammadi M."/>
            <person name="Matthews L."/>
            <person name="Matthews N.S.W."/>
            <person name="McLaren S."/>
            <person name="Milne S."/>
            <person name="Mistry S."/>
            <person name="Moore M.J.F."/>
            <person name="Nickerson T."/>
            <person name="O'Dell C.N."/>
            <person name="Oliver K."/>
            <person name="Palmeiri A."/>
            <person name="Palmer S.A."/>
            <person name="Parker A."/>
            <person name="Patel D."/>
            <person name="Pearce A.V."/>
            <person name="Peck A.I."/>
            <person name="Pelan S."/>
            <person name="Phelps K."/>
            <person name="Phillimore B.J."/>
            <person name="Plumb R."/>
            <person name="Rajan J."/>
            <person name="Raymond C."/>
            <person name="Rouse G."/>
            <person name="Saenphimmachak C."/>
            <person name="Sehra H.K."/>
            <person name="Sheridan E."/>
            <person name="Shownkeen R."/>
            <person name="Sims S."/>
            <person name="Skuce C.D."/>
            <person name="Smith M."/>
            <person name="Steward C."/>
            <person name="Subramanian S."/>
            <person name="Sycamore N."/>
            <person name="Tracey A."/>
            <person name="Tromans A."/>
            <person name="Van Helmond Z."/>
            <person name="Wall M."/>
            <person name="Wallis J.M."/>
            <person name="White S."/>
            <person name="Whitehead S.L."/>
            <person name="Wilkinson J.E."/>
            <person name="Willey D.L."/>
            <person name="Williams H."/>
            <person name="Wilming L."/>
            <person name="Wray P.W."/>
            <person name="Wu Z."/>
            <person name="Coulson A."/>
            <person name="Vaudin M."/>
            <person name="Sulston J.E."/>
            <person name="Durbin R.M."/>
            <person name="Hubbard T."/>
            <person name="Wooster R."/>
            <person name="Dunham I."/>
            <person name="Carter N.P."/>
            <person name="McVean G."/>
            <person name="Ross M.T."/>
            <person name="Harrow J."/>
            <person name="Olson M.V."/>
            <person name="Beck S."/>
            <person name="Rogers J."/>
            <person name="Bentley D.R."/>
        </authorList>
    </citation>
    <scope>NUCLEOTIDE SEQUENCE [LARGE SCALE GENOMIC DNA]</scope>
</reference>
<reference key="2">
    <citation type="submission" date="2005-09" db="EMBL/GenBank/DDBJ databases">
        <authorList>
            <person name="Mural R.J."/>
            <person name="Istrail S."/>
            <person name="Sutton G.G."/>
            <person name="Florea L."/>
            <person name="Halpern A.L."/>
            <person name="Mobarry C.M."/>
            <person name="Lippert R."/>
            <person name="Walenz B."/>
            <person name="Shatkay H."/>
            <person name="Dew I."/>
            <person name="Miller J.R."/>
            <person name="Flanigan M.J."/>
            <person name="Edwards N.J."/>
            <person name="Bolanos R."/>
            <person name="Fasulo D."/>
            <person name="Halldorsson B.V."/>
            <person name="Hannenhalli S."/>
            <person name="Turner R."/>
            <person name="Yooseph S."/>
            <person name="Lu F."/>
            <person name="Nusskern D.R."/>
            <person name="Shue B.C."/>
            <person name="Zheng X.H."/>
            <person name="Zhong F."/>
            <person name="Delcher A.L."/>
            <person name="Huson D.H."/>
            <person name="Kravitz S.A."/>
            <person name="Mouchard L."/>
            <person name="Reinert K."/>
            <person name="Remington K.A."/>
            <person name="Clark A.G."/>
            <person name="Waterman M.S."/>
            <person name="Eichler E.E."/>
            <person name="Adams M.D."/>
            <person name="Hunkapiller M.W."/>
            <person name="Myers E.W."/>
            <person name="Venter J.C."/>
        </authorList>
    </citation>
    <scope>NUCLEOTIDE SEQUENCE [LARGE SCALE GENOMIC DNA]</scope>
</reference>
<reference key="3">
    <citation type="journal article" date="2004" name="Genome Res.">
        <title>The status, quality, and expansion of the NIH full-length cDNA project: the Mammalian Gene Collection (MGC).</title>
        <authorList>
            <consortium name="The MGC Project Team"/>
        </authorList>
    </citation>
    <scope>NUCLEOTIDE SEQUENCE [LARGE SCALE MRNA]</scope>
</reference>
<reference key="4">
    <citation type="journal article" date="2005" name="J. Invest. Dermatol.">
        <title>Late cornified envelope family in differentiating epithelia -- response to calcium and ultraviolet irradiation.</title>
        <authorList>
            <person name="Jackson B."/>
            <person name="Tilli C.L."/>
            <person name="Hardman M."/>
            <person name="Avilion A."/>
            <person name="Macleod M."/>
            <person name="Ashcroft G."/>
            <person name="Byrne C."/>
        </authorList>
    </citation>
    <scope>NOMENCLATURE</scope>
    <scope>TISSUE SPECIFICITY</scope>
    <scope>INDUCTION BY CALCIUM AND UVB</scope>
</reference>
<reference key="5">
    <citation type="journal article" date="2023" name="J. Invest. Dermatol.">
        <title>CYSRT1: An Antimicrobial Epidermal Protein that Can Interact with Late Cornified Envelope Proteins.</title>
        <authorList>
            <person name="Niehues H."/>
            <person name="Rikken G."/>
            <person name="Kersten F.F.J."/>
            <person name="Eeftens J.M."/>
            <person name="van Vlijmen-Willems I.M.J.J."/>
            <person name="Rodijk-Olthuis D."/>
            <person name="Jansen P.A.M."/>
            <person name="Hendriks W.J.A.J."/>
            <person name="Ederveen T.H.A."/>
            <person name="Schalkwijk J."/>
            <person name="van den Bogaard E.H."/>
            <person name="Zeeuwen P.L.J.M."/>
        </authorList>
    </citation>
    <scope>INTERACTION WITH CYSRT1</scope>
</reference>
<keyword id="KW-0417">Keratinization</keyword>
<keyword id="KW-1267">Proteomics identification</keyword>
<keyword id="KW-1185">Reference proteome</keyword>